<protein>
    <recommendedName>
        <fullName evidence="2">SsrA-binding protein</fullName>
    </recommendedName>
    <alternativeName>
        <fullName evidence="2">Small protein B</fullName>
    </alternativeName>
</protein>
<keyword id="KW-0963">Cytoplasm</keyword>
<keyword id="KW-1185">Reference proteome</keyword>
<keyword id="KW-0694">RNA-binding</keyword>
<name>SSRP_ECOL6</name>
<evidence type="ECO:0000250" key="1"/>
<evidence type="ECO:0000255" key="2">
    <source>
        <dbReference type="HAMAP-Rule" id="MF_00023"/>
    </source>
</evidence>
<reference key="1">
    <citation type="journal article" date="2002" name="Proc. Natl. Acad. Sci. U.S.A.">
        <title>Extensive mosaic structure revealed by the complete genome sequence of uropathogenic Escherichia coli.</title>
        <authorList>
            <person name="Welch R.A."/>
            <person name="Burland V."/>
            <person name="Plunkett G. III"/>
            <person name="Redford P."/>
            <person name="Roesch P."/>
            <person name="Rasko D."/>
            <person name="Buckles E.L."/>
            <person name="Liou S.-R."/>
            <person name="Boutin A."/>
            <person name="Hackett J."/>
            <person name="Stroud D."/>
            <person name="Mayhew G.F."/>
            <person name="Rose D.J."/>
            <person name="Zhou S."/>
            <person name="Schwartz D.C."/>
            <person name="Perna N.T."/>
            <person name="Mobley H.L.T."/>
            <person name="Donnenberg M.S."/>
            <person name="Blattner F.R."/>
        </authorList>
    </citation>
    <scope>NUCLEOTIDE SEQUENCE [LARGE SCALE GENOMIC DNA]</scope>
    <source>
        <strain>CFT073 / ATCC 700928 / UPEC</strain>
    </source>
</reference>
<proteinExistence type="inferred from homology"/>
<organism>
    <name type="scientific">Escherichia coli O6:H1 (strain CFT073 / ATCC 700928 / UPEC)</name>
    <dbReference type="NCBI Taxonomy" id="199310"/>
    <lineage>
        <taxon>Bacteria</taxon>
        <taxon>Pseudomonadati</taxon>
        <taxon>Pseudomonadota</taxon>
        <taxon>Gammaproteobacteria</taxon>
        <taxon>Enterobacterales</taxon>
        <taxon>Enterobacteriaceae</taxon>
        <taxon>Escherichia</taxon>
    </lineage>
</organism>
<feature type="initiator methionine" description="Removed" evidence="1">
    <location>
        <position position="1"/>
    </location>
</feature>
<feature type="chain" id="PRO_0000102946" description="SsrA-binding protein">
    <location>
        <begin position="2"/>
        <end position="160"/>
    </location>
</feature>
<gene>
    <name evidence="2" type="primary">smpB</name>
    <name type="synonym">smqB</name>
    <name type="ordered locus">c3142</name>
</gene>
<dbReference type="EMBL" id="AE014075">
    <property type="protein sequence ID" value="AAN81592.1"/>
    <property type="molecule type" value="Genomic_DNA"/>
</dbReference>
<dbReference type="RefSeq" id="WP_000162574.1">
    <property type="nucleotide sequence ID" value="NZ_CP051263.1"/>
</dbReference>
<dbReference type="SMR" id="P0A833"/>
<dbReference type="STRING" id="199310.c3142"/>
<dbReference type="GeneID" id="93774470"/>
<dbReference type="KEGG" id="ecc:c3142"/>
<dbReference type="eggNOG" id="COG0691">
    <property type="taxonomic scope" value="Bacteria"/>
</dbReference>
<dbReference type="HOGENOM" id="CLU_108953_3_0_6"/>
<dbReference type="BioCyc" id="ECOL199310:C3142-MONOMER"/>
<dbReference type="Proteomes" id="UP000001410">
    <property type="component" value="Chromosome"/>
</dbReference>
<dbReference type="GO" id="GO:0005829">
    <property type="term" value="C:cytosol"/>
    <property type="evidence" value="ECO:0007669"/>
    <property type="project" value="TreeGrafter"/>
</dbReference>
<dbReference type="GO" id="GO:0003723">
    <property type="term" value="F:RNA binding"/>
    <property type="evidence" value="ECO:0007669"/>
    <property type="project" value="UniProtKB-UniRule"/>
</dbReference>
<dbReference type="GO" id="GO:0070929">
    <property type="term" value="P:trans-translation"/>
    <property type="evidence" value="ECO:0007669"/>
    <property type="project" value="UniProtKB-UniRule"/>
</dbReference>
<dbReference type="CDD" id="cd09294">
    <property type="entry name" value="SmpB"/>
    <property type="match status" value="1"/>
</dbReference>
<dbReference type="FunFam" id="2.40.280.10:FF:000001">
    <property type="entry name" value="SsrA-binding protein"/>
    <property type="match status" value="1"/>
</dbReference>
<dbReference type="Gene3D" id="2.40.280.10">
    <property type="match status" value="1"/>
</dbReference>
<dbReference type="HAMAP" id="MF_00023">
    <property type="entry name" value="SmpB"/>
    <property type="match status" value="1"/>
</dbReference>
<dbReference type="InterPro" id="IPR023620">
    <property type="entry name" value="SmpB"/>
</dbReference>
<dbReference type="InterPro" id="IPR000037">
    <property type="entry name" value="SsrA-bd_prot"/>
</dbReference>
<dbReference type="InterPro" id="IPR020081">
    <property type="entry name" value="SsrA-bd_prot_CS"/>
</dbReference>
<dbReference type="NCBIfam" id="NF003843">
    <property type="entry name" value="PRK05422.1"/>
    <property type="match status" value="1"/>
</dbReference>
<dbReference type="NCBIfam" id="TIGR00086">
    <property type="entry name" value="smpB"/>
    <property type="match status" value="1"/>
</dbReference>
<dbReference type="PANTHER" id="PTHR30308:SF2">
    <property type="entry name" value="SSRA-BINDING PROTEIN"/>
    <property type="match status" value="1"/>
</dbReference>
<dbReference type="PANTHER" id="PTHR30308">
    <property type="entry name" value="TMRNA-BINDING COMPONENT OF TRANS-TRANSLATION TAGGING COMPLEX"/>
    <property type="match status" value="1"/>
</dbReference>
<dbReference type="Pfam" id="PF01668">
    <property type="entry name" value="SmpB"/>
    <property type="match status" value="1"/>
</dbReference>
<dbReference type="SUPFAM" id="SSF74982">
    <property type="entry name" value="Small protein B (SmpB)"/>
    <property type="match status" value="1"/>
</dbReference>
<dbReference type="PROSITE" id="PS01317">
    <property type="entry name" value="SSRP"/>
    <property type="match status" value="1"/>
</dbReference>
<accession>P0A833</accession>
<accession>P32052</accession>
<accession>P77011</accession>
<sequence>MTKKKAHKPGSATIALNKRARHEYFIEEEFEAGLALQGWEVKSLRAGKANISDSYVLLRDGEAFLFGANITPMAVASTHVVCDPTRTRKLLLNQRELDSLYGRVNREGYTVVALSLYWKNAWCKVKIGVAKGKKQHDKRSDIKEREWQVDKARIMKNAHR</sequence>
<comment type="function">
    <text evidence="2">Required for rescue of stalled ribosomes mediated by trans-translation. Binds to transfer-messenger RNA (tmRNA), required for stable association of tmRNA with ribosomes. tmRNA and SmpB together mimic tRNA shape, replacing the anticodon stem-loop with SmpB. tmRNA is encoded by the ssrA gene; the 2 termini fold to resemble tRNA(Ala) and it encodes a 'tag peptide', a short internal open reading frame. During trans-translation Ala-aminoacylated tmRNA acts like a tRNA, entering the A-site of stalled ribosomes, displacing the stalled mRNA. The ribosome then switches to translate the ORF on the tmRNA; the nascent peptide is terminated with the 'tag peptide' encoded by the tmRNA and targeted for degradation. The ribosome is freed to recommence translation, which seems to be the essential function of trans-translation.</text>
</comment>
<comment type="subcellular location">
    <subcellularLocation>
        <location evidence="2">Cytoplasm</location>
    </subcellularLocation>
    <text evidence="2">The tmRNA-SmpB complex associates with stalled 70S ribosomes.</text>
</comment>
<comment type="similarity">
    <text evidence="2">Belongs to the SmpB family.</text>
</comment>